<gene>
    <name type="primary">tusC</name>
    <name type="ordered locus">VV3034</name>
</gene>
<evidence type="ECO:0000250" key="1"/>
<evidence type="ECO:0000305" key="2"/>
<accession>Q7MH38</accession>
<comment type="function">
    <text evidence="1">Could be part of a sulfur-relay system.</text>
</comment>
<comment type="subcellular location">
    <subcellularLocation>
        <location evidence="1">Cytoplasm</location>
    </subcellularLocation>
</comment>
<comment type="similarity">
    <text evidence="2">Belongs to the DsrF/TusC family.</text>
</comment>
<feature type="chain" id="PRO_0000214895" description="Protein TusC homolog">
    <location>
        <begin position="1"/>
        <end position="118"/>
    </location>
</feature>
<reference key="1">
    <citation type="journal article" date="2003" name="Genome Res.">
        <title>Comparative genome analysis of Vibrio vulnificus, a marine pathogen.</title>
        <authorList>
            <person name="Chen C.-Y."/>
            <person name="Wu K.-M."/>
            <person name="Chang Y.-C."/>
            <person name="Chang C.-H."/>
            <person name="Tsai H.-C."/>
            <person name="Liao T.-L."/>
            <person name="Liu Y.-M."/>
            <person name="Chen H.-J."/>
            <person name="Shen A.B.-T."/>
            <person name="Li J.-C."/>
            <person name="Su T.-L."/>
            <person name="Shao C.-P."/>
            <person name="Lee C.-T."/>
            <person name="Hor L.-I."/>
            <person name="Tsai S.-F."/>
        </authorList>
    </citation>
    <scope>NUCLEOTIDE SEQUENCE [LARGE SCALE GENOMIC DNA]</scope>
    <source>
        <strain>YJ016</strain>
    </source>
</reference>
<sequence length="118" mass="13044">MSQLTYLFRTAPHSHSSGREGVDALLAASAYCEALSVVFIGDGVYQLLAGQQTASILCKDYAPMFKLFDLYDIEHVYVCQQSLQQRGLTSEDLLIDVEVVDTVRLQGVLHNSAQLLSF</sequence>
<dbReference type="EMBL" id="BA000037">
    <property type="protein sequence ID" value="BAC95798.1"/>
    <property type="molecule type" value="Genomic_DNA"/>
</dbReference>
<dbReference type="RefSeq" id="WP_011151307.1">
    <property type="nucleotide sequence ID" value="NC_005139.1"/>
</dbReference>
<dbReference type="SMR" id="Q7MH38"/>
<dbReference type="STRING" id="672.VV93_v1c27620"/>
<dbReference type="KEGG" id="vvy:VV3034"/>
<dbReference type="PATRIC" id="fig|196600.6.peg.3011"/>
<dbReference type="eggNOG" id="COG2923">
    <property type="taxonomic scope" value="Bacteria"/>
</dbReference>
<dbReference type="HOGENOM" id="CLU_155943_1_0_6"/>
<dbReference type="Proteomes" id="UP000002675">
    <property type="component" value="Chromosome I"/>
</dbReference>
<dbReference type="GO" id="GO:0005737">
    <property type="term" value="C:cytoplasm"/>
    <property type="evidence" value="ECO:0007669"/>
    <property type="project" value="UniProtKB-SubCell"/>
</dbReference>
<dbReference type="Gene3D" id="3.40.1260.10">
    <property type="entry name" value="DsrEFH-like"/>
    <property type="match status" value="1"/>
</dbReference>
<dbReference type="InterPro" id="IPR027396">
    <property type="entry name" value="DsrEFH-like"/>
</dbReference>
<dbReference type="InterPro" id="IPR003787">
    <property type="entry name" value="Sulphur_relay_DsrE/F-like"/>
</dbReference>
<dbReference type="InterPro" id="IPR017462">
    <property type="entry name" value="Sulphur_relay_TusC/DsrF"/>
</dbReference>
<dbReference type="NCBIfam" id="NF001238">
    <property type="entry name" value="PRK00211.1"/>
    <property type="match status" value="1"/>
</dbReference>
<dbReference type="NCBIfam" id="TIGR03010">
    <property type="entry name" value="sulf_tusC_dsrF"/>
    <property type="match status" value="1"/>
</dbReference>
<dbReference type="PANTHER" id="PTHR38780">
    <property type="entry name" value="PROTEIN TUSC"/>
    <property type="match status" value="1"/>
</dbReference>
<dbReference type="PANTHER" id="PTHR38780:SF1">
    <property type="entry name" value="PROTEIN TUSC"/>
    <property type="match status" value="1"/>
</dbReference>
<dbReference type="Pfam" id="PF02635">
    <property type="entry name" value="DsrE"/>
    <property type="match status" value="1"/>
</dbReference>
<dbReference type="SUPFAM" id="SSF75169">
    <property type="entry name" value="DsrEFH-like"/>
    <property type="match status" value="1"/>
</dbReference>
<name>TUSC_VIBVY</name>
<protein>
    <recommendedName>
        <fullName>Protein TusC homolog</fullName>
    </recommendedName>
</protein>
<keyword id="KW-0963">Cytoplasm</keyword>
<organism>
    <name type="scientific">Vibrio vulnificus (strain YJ016)</name>
    <dbReference type="NCBI Taxonomy" id="196600"/>
    <lineage>
        <taxon>Bacteria</taxon>
        <taxon>Pseudomonadati</taxon>
        <taxon>Pseudomonadota</taxon>
        <taxon>Gammaproteobacteria</taxon>
        <taxon>Vibrionales</taxon>
        <taxon>Vibrionaceae</taxon>
        <taxon>Vibrio</taxon>
    </lineage>
</organism>
<proteinExistence type="inferred from homology"/>